<keyword id="KW-0963">Cytoplasm</keyword>
<keyword id="KW-0210">Decarboxylase</keyword>
<keyword id="KW-0456">Lyase</keyword>
<keyword id="KW-0627">Porphyrin biosynthesis</keyword>
<keyword id="KW-1185">Reference proteome</keyword>
<proteinExistence type="inferred from homology"/>
<organism>
    <name type="scientific">Campylobacter curvus (strain 525.92)</name>
    <dbReference type="NCBI Taxonomy" id="360105"/>
    <lineage>
        <taxon>Bacteria</taxon>
        <taxon>Pseudomonadati</taxon>
        <taxon>Campylobacterota</taxon>
        <taxon>Epsilonproteobacteria</taxon>
        <taxon>Campylobacterales</taxon>
        <taxon>Campylobacteraceae</taxon>
        <taxon>Campylobacter</taxon>
    </lineage>
</organism>
<evidence type="ECO:0000255" key="1">
    <source>
        <dbReference type="HAMAP-Rule" id="MF_00218"/>
    </source>
</evidence>
<name>DCUP_CAMC5</name>
<sequence length="342" mass="38027">MIFVDACLKKPTPYTPVWMMRQAGRYLPEYMAVRERAGDFLSLCKDYKKASAVTIQPVEILGVDAAILFSDILVVPLEMGMGLRFEKGEGPVFDRPVKTAGDLAVLDVDRAVKNLSYVYDTIALTRENLARDKALIGFCGAPWTIATYMIEGGGTKTYAVCKKLLYTNPEFLHQILAKVTAALTDYVKAQIRAGVDAVQIFDSWAGALEESAYFEFGWRYILQIVDSVKTEFPDIPLIVFPKGVSGFLDKISGNFEVFGVDWSTPIGLAKEKLSPKFVLQGNMEPTRLYSKKAIDAGVDKILNTMKGAPHIFNLGHGILPDIPVENAKYFIKQVQEKSHNHK</sequence>
<comment type="function">
    <text evidence="1">Catalyzes the decarboxylation of four acetate groups of uroporphyrinogen-III to yield coproporphyrinogen-III.</text>
</comment>
<comment type="catalytic activity">
    <reaction evidence="1">
        <text>uroporphyrinogen III + 4 H(+) = coproporphyrinogen III + 4 CO2</text>
        <dbReference type="Rhea" id="RHEA:19865"/>
        <dbReference type="ChEBI" id="CHEBI:15378"/>
        <dbReference type="ChEBI" id="CHEBI:16526"/>
        <dbReference type="ChEBI" id="CHEBI:57308"/>
        <dbReference type="ChEBI" id="CHEBI:57309"/>
        <dbReference type="EC" id="4.1.1.37"/>
    </reaction>
</comment>
<comment type="pathway">
    <text evidence="1">Porphyrin-containing compound metabolism; protoporphyrin-IX biosynthesis; coproporphyrinogen-III from 5-aminolevulinate: step 4/4.</text>
</comment>
<comment type="subunit">
    <text evidence="1">Homodimer.</text>
</comment>
<comment type="subcellular location">
    <subcellularLocation>
        <location evidence="1">Cytoplasm</location>
    </subcellularLocation>
</comment>
<comment type="similarity">
    <text evidence="1">Belongs to the uroporphyrinogen decarboxylase family.</text>
</comment>
<reference key="1">
    <citation type="submission" date="2007-07" db="EMBL/GenBank/DDBJ databases">
        <title>Genome sequence of Campylobacter curvus 525.92 isolated from human feces.</title>
        <authorList>
            <person name="Fouts D.E."/>
            <person name="Mongodin E.F."/>
            <person name="Puiu D."/>
            <person name="Sebastian Y."/>
            <person name="Miller W.G."/>
            <person name="Mandrell R.E."/>
            <person name="Lastovica A.J."/>
            <person name="Nelson K.E."/>
        </authorList>
    </citation>
    <scope>NUCLEOTIDE SEQUENCE [LARGE SCALE GENOMIC DNA]</scope>
    <source>
        <strain>525.92</strain>
    </source>
</reference>
<protein>
    <recommendedName>
        <fullName evidence="1">Uroporphyrinogen decarboxylase</fullName>
        <shortName evidence="1">UPD</shortName>
        <shortName evidence="1">URO-D</shortName>
        <ecNumber evidence="1">4.1.1.37</ecNumber>
    </recommendedName>
</protein>
<feature type="chain" id="PRO_1000023888" description="Uroporphyrinogen decarboxylase">
    <location>
        <begin position="1"/>
        <end position="342"/>
    </location>
</feature>
<feature type="binding site" evidence="1">
    <location>
        <begin position="21"/>
        <end position="25"/>
    </location>
    <ligand>
        <name>substrate</name>
    </ligand>
</feature>
<feature type="binding site" evidence="1">
    <location>
        <position position="71"/>
    </location>
    <ligand>
        <name>substrate</name>
    </ligand>
</feature>
<feature type="binding site" evidence="1">
    <location>
        <position position="148"/>
    </location>
    <ligand>
        <name>substrate</name>
    </ligand>
</feature>
<feature type="binding site" evidence="1">
    <location>
        <position position="203"/>
    </location>
    <ligand>
        <name>substrate</name>
    </ligand>
</feature>
<feature type="binding site" evidence="1">
    <location>
        <position position="316"/>
    </location>
    <ligand>
        <name>substrate</name>
    </ligand>
</feature>
<feature type="site" description="Transition state stabilizer" evidence="1">
    <location>
        <position position="71"/>
    </location>
</feature>
<gene>
    <name evidence="1" type="primary">hemE</name>
    <name type="ordered locus">Ccur92_14360</name>
    <name type="ORF">CCV52592_1470</name>
</gene>
<dbReference type="EC" id="4.1.1.37" evidence="1"/>
<dbReference type="EMBL" id="CP000767">
    <property type="protein sequence ID" value="EAT99979.1"/>
    <property type="molecule type" value="Genomic_DNA"/>
</dbReference>
<dbReference type="RefSeq" id="WP_011992594.1">
    <property type="nucleotide sequence ID" value="NC_009715.2"/>
</dbReference>
<dbReference type="SMR" id="A7GZU8"/>
<dbReference type="STRING" id="360105.CCV52592_1470"/>
<dbReference type="KEGG" id="ccv:CCV52592_1470"/>
<dbReference type="HOGENOM" id="CLU_040933_0_0_7"/>
<dbReference type="OrthoDB" id="9806656at2"/>
<dbReference type="UniPathway" id="UPA00251">
    <property type="reaction ID" value="UER00321"/>
</dbReference>
<dbReference type="Proteomes" id="UP000006380">
    <property type="component" value="Chromosome"/>
</dbReference>
<dbReference type="GO" id="GO:0005829">
    <property type="term" value="C:cytosol"/>
    <property type="evidence" value="ECO:0007669"/>
    <property type="project" value="TreeGrafter"/>
</dbReference>
<dbReference type="GO" id="GO:0004853">
    <property type="term" value="F:uroporphyrinogen decarboxylase activity"/>
    <property type="evidence" value="ECO:0007669"/>
    <property type="project" value="UniProtKB-UniRule"/>
</dbReference>
<dbReference type="GO" id="GO:0019353">
    <property type="term" value="P:protoporphyrinogen IX biosynthetic process from glutamate"/>
    <property type="evidence" value="ECO:0007669"/>
    <property type="project" value="TreeGrafter"/>
</dbReference>
<dbReference type="CDD" id="cd00717">
    <property type="entry name" value="URO-D"/>
    <property type="match status" value="1"/>
</dbReference>
<dbReference type="FunFam" id="3.20.20.210:FF:000007">
    <property type="entry name" value="Uroporphyrinogen decarboxylase"/>
    <property type="match status" value="1"/>
</dbReference>
<dbReference type="Gene3D" id="3.20.20.210">
    <property type="match status" value="1"/>
</dbReference>
<dbReference type="HAMAP" id="MF_00218">
    <property type="entry name" value="URO_D"/>
    <property type="match status" value="1"/>
</dbReference>
<dbReference type="InterPro" id="IPR038071">
    <property type="entry name" value="UROD/MetE-like_sf"/>
</dbReference>
<dbReference type="InterPro" id="IPR006361">
    <property type="entry name" value="Uroporphyrinogen_deCO2ase_HemE"/>
</dbReference>
<dbReference type="InterPro" id="IPR000257">
    <property type="entry name" value="Uroporphyrinogen_deCOase"/>
</dbReference>
<dbReference type="NCBIfam" id="TIGR01464">
    <property type="entry name" value="hemE"/>
    <property type="match status" value="1"/>
</dbReference>
<dbReference type="PANTHER" id="PTHR21091">
    <property type="entry name" value="METHYLTETRAHYDROFOLATE:HOMOCYSTEINE METHYLTRANSFERASE RELATED"/>
    <property type="match status" value="1"/>
</dbReference>
<dbReference type="PANTHER" id="PTHR21091:SF169">
    <property type="entry name" value="UROPORPHYRINOGEN DECARBOXYLASE"/>
    <property type="match status" value="1"/>
</dbReference>
<dbReference type="Pfam" id="PF01208">
    <property type="entry name" value="URO-D"/>
    <property type="match status" value="1"/>
</dbReference>
<dbReference type="SUPFAM" id="SSF51726">
    <property type="entry name" value="UROD/MetE-like"/>
    <property type="match status" value="1"/>
</dbReference>
<dbReference type="PROSITE" id="PS00906">
    <property type="entry name" value="UROD_1"/>
    <property type="match status" value="1"/>
</dbReference>
<dbReference type="PROSITE" id="PS00907">
    <property type="entry name" value="UROD_2"/>
    <property type="match status" value="1"/>
</dbReference>
<accession>A7GZU8</accession>